<reference key="1">
    <citation type="submission" date="2009-02" db="EMBL/GenBank/DDBJ databases">
        <title>Vibrio splendidus str. LGP32 complete genome.</title>
        <authorList>
            <person name="Mazel D."/>
            <person name="Le Roux F."/>
        </authorList>
    </citation>
    <scope>NUCLEOTIDE SEQUENCE [LARGE SCALE GENOMIC DNA]</scope>
    <source>
        <strain>LGP32</strain>
    </source>
</reference>
<dbReference type="EC" id="5.4.99.12" evidence="1"/>
<dbReference type="EMBL" id="FM954972">
    <property type="protein sequence ID" value="CAV17914.1"/>
    <property type="molecule type" value="Genomic_DNA"/>
</dbReference>
<dbReference type="SMR" id="B7VL84"/>
<dbReference type="STRING" id="575788.VS_0903"/>
<dbReference type="KEGG" id="vsp:VS_0903"/>
<dbReference type="eggNOG" id="COG0101">
    <property type="taxonomic scope" value="Bacteria"/>
</dbReference>
<dbReference type="HOGENOM" id="CLU_014673_0_2_6"/>
<dbReference type="Proteomes" id="UP000009100">
    <property type="component" value="Chromosome 1"/>
</dbReference>
<dbReference type="GO" id="GO:0003723">
    <property type="term" value="F:RNA binding"/>
    <property type="evidence" value="ECO:0007669"/>
    <property type="project" value="InterPro"/>
</dbReference>
<dbReference type="GO" id="GO:0160147">
    <property type="term" value="F:tRNA pseudouridine(38-40) synthase activity"/>
    <property type="evidence" value="ECO:0007669"/>
    <property type="project" value="UniProtKB-EC"/>
</dbReference>
<dbReference type="GO" id="GO:0031119">
    <property type="term" value="P:tRNA pseudouridine synthesis"/>
    <property type="evidence" value="ECO:0007669"/>
    <property type="project" value="UniProtKB-UniRule"/>
</dbReference>
<dbReference type="CDD" id="cd02570">
    <property type="entry name" value="PseudoU_synth_EcTruA"/>
    <property type="match status" value="1"/>
</dbReference>
<dbReference type="FunFam" id="3.30.70.580:FF:000001">
    <property type="entry name" value="tRNA pseudouridine synthase A"/>
    <property type="match status" value="1"/>
</dbReference>
<dbReference type="FunFam" id="3.30.70.660:FF:000001">
    <property type="entry name" value="tRNA pseudouridine synthase A"/>
    <property type="match status" value="1"/>
</dbReference>
<dbReference type="Gene3D" id="3.30.70.660">
    <property type="entry name" value="Pseudouridine synthase I, catalytic domain, C-terminal subdomain"/>
    <property type="match status" value="1"/>
</dbReference>
<dbReference type="Gene3D" id="3.30.70.580">
    <property type="entry name" value="Pseudouridine synthase I, catalytic domain, N-terminal subdomain"/>
    <property type="match status" value="1"/>
</dbReference>
<dbReference type="HAMAP" id="MF_00171">
    <property type="entry name" value="TruA"/>
    <property type="match status" value="1"/>
</dbReference>
<dbReference type="InterPro" id="IPR020103">
    <property type="entry name" value="PsdUridine_synth_cat_dom_sf"/>
</dbReference>
<dbReference type="InterPro" id="IPR001406">
    <property type="entry name" value="PsdUridine_synth_TruA"/>
</dbReference>
<dbReference type="InterPro" id="IPR020097">
    <property type="entry name" value="PsdUridine_synth_TruA_a/b_dom"/>
</dbReference>
<dbReference type="InterPro" id="IPR020095">
    <property type="entry name" value="PsdUridine_synth_TruA_C"/>
</dbReference>
<dbReference type="InterPro" id="IPR020094">
    <property type="entry name" value="TruA/RsuA/RluB/E/F_N"/>
</dbReference>
<dbReference type="NCBIfam" id="TIGR00071">
    <property type="entry name" value="hisT_truA"/>
    <property type="match status" value="1"/>
</dbReference>
<dbReference type="PANTHER" id="PTHR11142">
    <property type="entry name" value="PSEUDOURIDYLATE SYNTHASE"/>
    <property type="match status" value="1"/>
</dbReference>
<dbReference type="PANTHER" id="PTHR11142:SF0">
    <property type="entry name" value="TRNA PSEUDOURIDINE SYNTHASE-LIKE 1"/>
    <property type="match status" value="1"/>
</dbReference>
<dbReference type="Pfam" id="PF01416">
    <property type="entry name" value="PseudoU_synth_1"/>
    <property type="match status" value="2"/>
</dbReference>
<dbReference type="PIRSF" id="PIRSF001430">
    <property type="entry name" value="tRNA_psdUrid_synth"/>
    <property type="match status" value="1"/>
</dbReference>
<dbReference type="SUPFAM" id="SSF55120">
    <property type="entry name" value="Pseudouridine synthase"/>
    <property type="match status" value="1"/>
</dbReference>
<organism>
    <name type="scientific">Vibrio atlanticus (strain LGP32)</name>
    <name type="common">Vibrio splendidus (strain Mel32)</name>
    <dbReference type="NCBI Taxonomy" id="575788"/>
    <lineage>
        <taxon>Bacteria</taxon>
        <taxon>Pseudomonadati</taxon>
        <taxon>Pseudomonadota</taxon>
        <taxon>Gammaproteobacteria</taxon>
        <taxon>Vibrionales</taxon>
        <taxon>Vibrionaceae</taxon>
        <taxon>Vibrio</taxon>
    </lineage>
</organism>
<keyword id="KW-0413">Isomerase</keyword>
<keyword id="KW-0819">tRNA processing</keyword>
<feature type="chain" id="PRO_1000194580" description="tRNA pseudouridine synthase A">
    <location>
        <begin position="1"/>
        <end position="264"/>
    </location>
</feature>
<feature type="active site" description="Nucleophile" evidence="1">
    <location>
        <position position="51"/>
    </location>
</feature>
<feature type="binding site" evidence="1">
    <location>
        <position position="109"/>
    </location>
    <ligand>
        <name>substrate</name>
    </ligand>
</feature>
<evidence type="ECO:0000255" key="1">
    <source>
        <dbReference type="HAMAP-Rule" id="MF_00171"/>
    </source>
</evidence>
<proteinExistence type="inferred from homology"/>
<name>TRUA_VIBA3</name>
<protein>
    <recommendedName>
        <fullName evidence="1">tRNA pseudouridine synthase A</fullName>
        <ecNumber evidence="1">5.4.99.12</ecNumber>
    </recommendedName>
    <alternativeName>
        <fullName evidence="1">tRNA pseudouridine(38-40) synthase</fullName>
    </alternativeName>
    <alternativeName>
        <fullName evidence="1">tRNA pseudouridylate synthase I</fullName>
    </alternativeName>
    <alternativeName>
        <fullName evidence="1">tRNA-uridine isomerase I</fullName>
    </alternativeName>
</protein>
<sequence length="264" mass="29957">MKIALGIEYNGTHYFGWQRQRDVKSVQEELEKALSVVANHPVEVMCAGRTDAGVHGTGQVVHFETNVDRKMVAWTMGANANMPKDIAVRWATEVNEDFHARFSATARRYRYIIFNHALRPGILNSGVSHYHGHLDEKKMHEAGQYLLGENDFTSFRATHCQSRSPWRNMIHLNVTRHGHYIVIDIKANAFVHHMVRNITGSLIAVGKGDQKPEWIQWLLEAKDRKVAGATAKAEGLYLVDVDYPEHFGLPREPIGPLFLPDNLN</sequence>
<comment type="function">
    <text evidence="1">Formation of pseudouridine at positions 38, 39 and 40 in the anticodon stem and loop of transfer RNAs.</text>
</comment>
<comment type="catalytic activity">
    <reaction evidence="1">
        <text>uridine(38/39/40) in tRNA = pseudouridine(38/39/40) in tRNA</text>
        <dbReference type="Rhea" id="RHEA:22376"/>
        <dbReference type="Rhea" id="RHEA-COMP:10085"/>
        <dbReference type="Rhea" id="RHEA-COMP:10087"/>
        <dbReference type="ChEBI" id="CHEBI:65314"/>
        <dbReference type="ChEBI" id="CHEBI:65315"/>
        <dbReference type="EC" id="5.4.99.12"/>
    </reaction>
</comment>
<comment type="subunit">
    <text evidence="1">Homodimer.</text>
</comment>
<comment type="similarity">
    <text evidence="1">Belongs to the tRNA pseudouridine synthase TruA family.</text>
</comment>
<accession>B7VL84</accession>
<gene>
    <name evidence="1" type="primary">truA</name>
    <name type="ordered locus">VS_0903</name>
</gene>